<protein>
    <recommendedName>
        <fullName evidence="4">Protein PSK SIMULATOR 1</fullName>
        <shortName evidence="4">AtPSI1</shortName>
    </recommendedName>
</protein>
<evidence type="ECO:0000255" key="1"/>
<evidence type="ECO:0000256" key="2">
    <source>
        <dbReference type="SAM" id="MobiDB-lite"/>
    </source>
</evidence>
<evidence type="ECO:0000269" key="3">
    <source>
    </source>
</evidence>
<evidence type="ECO:0000303" key="4">
    <source>
    </source>
</evidence>
<evidence type="ECO:0000305" key="5"/>
<evidence type="ECO:0000312" key="6">
    <source>
        <dbReference type="Araport" id="AT1G34320"/>
    </source>
</evidence>
<evidence type="ECO:0000312" key="7">
    <source>
        <dbReference type="EMBL" id="AAD39604.1"/>
    </source>
</evidence>
<reference key="1">
    <citation type="journal article" date="2000" name="Nature">
        <title>Sequence and analysis of chromosome 1 of the plant Arabidopsis thaliana.</title>
        <authorList>
            <person name="Theologis A."/>
            <person name="Ecker J.R."/>
            <person name="Palm C.J."/>
            <person name="Federspiel N.A."/>
            <person name="Kaul S."/>
            <person name="White O."/>
            <person name="Alonso J."/>
            <person name="Altafi H."/>
            <person name="Araujo R."/>
            <person name="Bowman C.L."/>
            <person name="Brooks S.Y."/>
            <person name="Buehler E."/>
            <person name="Chan A."/>
            <person name="Chao Q."/>
            <person name="Chen H."/>
            <person name="Cheuk R.F."/>
            <person name="Chin C.W."/>
            <person name="Chung M.K."/>
            <person name="Conn L."/>
            <person name="Conway A.B."/>
            <person name="Conway A.R."/>
            <person name="Creasy T.H."/>
            <person name="Dewar K."/>
            <person name="Dunn P."/>
            <person name="Etgu P."/>
            <person name="Feldblyum T.V."/>
            <person name="Feng J.-D."/>
            <person name="Fong B."/>
            <person name="Fujii C.Y."/>
            <person name="Gill J.E."/>
            <person name="Goldsmith A.D."/>
            <person name="Haas B."/>
            <person name="Hansen N.F."/>
            <person name="Hughes B."/>
            <person name="Huizar L."/>
            <person name="Hunter J.L."/>
            <person name="Jenkins J."/>
            <person name="Johnson-Hopson C."/>
            <person name="Khan S."/>
            <person name="Khaykin E."/>
            <person name="Kim C.J."/>
            <person name="Koo H.L."/>
            <person name="Kremenetskaia I."/>
            <person name="Kurtz D.B."/>
            <person name="Kwan A."/>
            <person name="Lam B."/>
            <person name="Langin-Hooper S."/>
            <person name="Lee A."/>
            <person name="Lee J.M."/>
            <person name="Lenz C.A."/>
            <person name="Li J.H."/>
            <person name="Li Y.-P."/>
            <person name="Lin X."/>
            <person name="Liu S.X."/>
            <person name="Liu Z.A."/>
            <person name="Luros J.S."/>
            <person name="Maiti R."/>
            <person name="Marziali A."/>
            <person name="Militscher J."/>
            <person name="Miranda M."/>
            <person name="Nguyen M."/>
            <person name="Nierman W.C."/>
            <person name="Osborne B.I."/>
            <person name="Pai G."/>
            <person name="Peterson J."/>
            <person name="Pham P.K."/>
            <person name="Rizzo M."/>
            <person name="Rooney T."/>
            <person name="Rowley D."/>
            <person name="Sakano H."/>
            <person name="Salzberg S.L."/>
            <person name="Schwartz J.R."/>
            <person name="Shinn P."/>
            <person name="Southwick A.M."/>
            <person name="Sun H."/>
            <person name="Tallon L.J."/>
            <person name="Tambunga G."/>
            <person name="Toriumi M.J."/>
            <person name="Town C.D."/>
            <person name="Utterback T."/>
            <person name="Van Aken S."/>
            <person name="Vaysberg M."/>
            <person name="Vysotskaia V.S."/>
            <person name="Walker M."/>
            <person name="Wu D."/>
            <person name="Yu G."/>
            <person name="Fraser C.M."/>
            <person name="Venter J.C."/>
            <person name="Davis R.W."/>
        </authorList>
    </citation>
    <scope>NUCLEOTIDE SEQUENCE [LARGE SCALE GENOMIC DNA]</scope>
    <source>
        <strain>cv. Columbia</strain>
    </source>
</reference>
<reference key="2">
    <citation type="journal article" date="2017" name="Plant J.">
        <title>Araport11: a complete reannotation of the Arabidopsis thaliana reference genome.</title>
        <authorList>
            <person name="Cheng C.Y."/>
            <person name="Krishnakumar V."/>
            <person name="Chan A.P."/>
            <person name="Thibaud-Nissen F."/>
            <person name="Schobel S."/>
            <person name="Town C.D."/>
        </authorList>
    </citation>
    <scope>GENOME REANNOTATION</scope>
    <source>
        <strain>cv. Columbia</strain>
    </source>
</reference>
<reference key="3">
    <citation type="submission" date="2003-10" db="EMBL/GenBank/DDBJ databases">
        <title>Arabidopsis ORF clones.</title>
        <authorList>
            <person name="Cheuk R.F."/>
            <person name="Chen H."/>
            <person name="Kim C.J."/>
            <person name="Shinn P."/>
            <person name="Carninci P."/>
            <person name="Hayashizaki Y."/>
            <person name="Ishida J."/>
            <person name="Kamiya A."/>
            <person name="Kawai J."/>
            <person name="Narusaka M."/>
            <person name="Sakurai T."/>
            <person name="Satou M."/>
            <person name="Seki M."/>
            <person name="Shinozaki K."/>
            <person name="Ecker J.R."/>
        </authorList>
    </citation>
    <scope>NUCLEOTIDE SEQUENCE [LARGE SCALE MRNA]</scope>
    <source>
        <strain>cv. Columbia</strain>
    </source>
</reference>
<reference key="4">
    <citation type="submission" date="2004-09" db="EMBL/GenBank/DDBJ databases">
        <title>Large-scale analysis of RIKEN Arabidopsis full-length (RAFL) cDNAs.</title>
        <authorList>
            <person name="Totoki Y."/>
            <person name="Seki M."/>
            <person name="Ishida J."/>
            <person name="Nakajima M."/>
            <person name="Enju A."/>
            <person name="Kamiya A."/>
            <person name="Narusaka M."/>
            <person name="Shin-i T."/>
            <person name="Nakagawa M."/>
            <person name="Sakamoto N."/>
            <person name="Oishi K."/>
            <person name="Kohara Y."/>
            <person name="Kobayashi M."/>
            <person name="Toyoda A."/>
            <person name="Sakaki Y."/>
            <person name="Sakurai T."/>
            <person name="Iida K."/>
            <person name="Akiyama K."/>
            <person name="Satou M."/>
            <person name="Toyoda T."/>
            <person name="Konagaya A."/>
            <person name="Carninci P."/>
            <person name="Kawai J."/>
            <person name="Hayashizaki Y."/>
            <person name="Shinozaki K."/>
        </authorList>
    </citation>
    <scope>NUCLEOTIDE SEQUENCE [LARGE SCALE MRNA]</scope>
    <source>
        <strain>cv. Columbia</strain>
    </source>
</reference>
<reference key="5">
    <citation type="journal article" date="2014" name="Plant Mol. Biol.">
        <title>The PSI family of nuclear proteins is required for growth in arabidopsis.</title>
        <authorList>
            <person name="Stuehrwohldt N."/>
            <person name="Hartmann J."/>
            <person name="Dahlke R.I."/>
            <person name="Oecking C."/>
            <person name="Sauter M."/>
        </authorList>
    </citation>
    <scope>FUNCTION</scope>
    <scope>MUTAGENESIS OF GLY-2</scope>
    <scope>DISRUPTION PHENOTYPE</scope>
    <scope>SUBCELLULAR LOCATION</scope>
    <source>
        <strain>cv. Columbia</strain>
    </source>
</reference>
<organism>
    <name type="scientific">Arabidopsis thaliana</name>
    <name type="common">Mouse-ear cress</name>
    <dbReference type="NCBI Taxonomy" id="3702"/>
    <lineage>
        <taxon>Eukaryota</taxon>
        <taxon>Viridiplantae</taxon>
        <taxon>Streptophyta</taxon>
        <taxon>Embryophyta</taxon>
        <taxon>Tracheophyta</taxon>
        <taxon>Spermatophyta</taxon>
        <taxon>Magnoliopsida</taxon>
        <taxon>eudicotyledons</taxon>
        <taxon>Gunneridae</taxon>
        <taxon>Pentapetalae</taxon>
        <taxon>rosids</taxon>
        <taxon>malvids</taxon>
        <taxon>Brassicales</taxon>
        <taxon>Brassicaceae</taxon>
        <taxon>Camelineae</taxon>
        <taxon>Arabidopsis</taxon>
    </lineage>
</organism>
<feature type="initiator methionine" description="Removed" evidence="1">
    <location>
        <position position="1"/>
    </location>
</feature>
<feature type="chain" id="PRO_0000449314" description="Protein PSK SIMULATOR 1">
    <location>
        <begin position="2"/>
        <end position="657"/>
    </location>
</feature>
<feature type="region of interest" description="Disordered" evidence="2">
    <location>
        <begin position="1"/>
        <end position="80"/>
    </location>
</feature>
<feature type="region of interest" description="Disordered" evidence="2">
    <location>
        <begin position="534"/>
        <end position="559"/>
    </location>
</feature>
<feature type="compositionally biased region" description="Polar residues" evidence="2">
    <location>
        <begin position="1"/>
        <end position="15"/>
    </location>
</feature>
<feature type="compositionally biased region" description="Polar residues" evidence="2">
    <location>
        <begin position="26"/>
        <end position="39"/>
    </location>
</feature>
<feature type="compositionally biased region" description="Polar residues" evidence="2">
    <location>
        <begin position="62"/>
        <end position="76"/>
    </location>
</feature>
<feature type="compositionally biased region" description="Polar residues" evidence="2">
    <location>
        <begin position="540"/>
        <end position="556"/>
    </location>
</feature>
<feature type="lipid moiety-binding region" description="N-myristoyl glycine" evidence="1">
    <location>
        <position position="2"/>
    </location>
</feature>
<feature type="mutagenesis site" description="Normal phenotype. Able to complement the growth-retarded phenotype of plants lacking PSI1." evidence="3">
    <original>G</original>
    <variation>A</variation>
    <location>
        <position position="2"/>
    </location>
</feature>
<gene>
    <name evidence="4" type="primary">PSI1</name>
    <name evidence="6" type="ordered locus">At1g34320</name>
    <name evidence="7" type="ORF">F23M19.3</name>
</gene>
<proteinExistence type="evidence at protein level"/>
<comment type="function">
    <text evidence="3">Promotes seedling growth probably via the regulation of phytosulfokine (PSK) signaling; PSK are peptide phytohormones acting as growth factors (PubMed:25062973). Together with PSI2 and PSI3, required during vegetative growth and reproduction (PubMed:25062973). May also have a function in carbohydrate metabolism (PubMed:25062973).</text>
</comment>
<comment type="subcellular location">
    <subcellularLocation>
        <location evidence="3">Nucleus</location>
    </subcellularLocation>
</comment>
<comment type="disruption phenotype">
    <text evidence="3">Short roots and hypocotyls due to both a reduced cell number and reduced cell elongation (PubMed:25062973). Plants missing both PSI1 and PSI3 are dwarf and contain reduced starch levels; these phenotypes are partially rescued by sucrose (PubMed:25062973).</text>
</comment>
<comment type="sequence caution" evidence="5">
    <conflict type="erroneous gene model prediction">
        <sequence resource="EMBL-CDS" id="AAD39604"/>
    </conflict>
</comment>
<sequence>MGGLCSRSSSVNNAPGGTFAHVNGHHLNNNASDLNSHSGESGLKDDPSPVTENVDDNKHTSESFSFPIVSSGSHPQNIEDGIPRLSRVLSQKSRSTKSRQAAVAKVSEVSSLLGRAGTMGLGKAVDVLDTLGSSMTNLNLSGGFSSATTVKGNKISILSFEVANTIVKGANLMHSLSKDSITHLKEVVLPSEGVQNLISKDMDELLRIAAADKREELRIFSGEVVRFGNRCKDPQYHNLDRFFDRLGSEFTPQKHLKQEAETIMHQMMSFVHFTADLYHELHALDRFEQDYQRKIQEEENPSTAQRGVGDTLAILRTELKSQKKHVRNLKKKSLWSRILEEVMEKLVDVVHFLHLEIHEAFGGADPDKPANDPPINHKKLGSAGLALHYANIITQIDTLVSRSSTMPASTRDALYQGLPPSIKSALRSRIQSFQVKEELTVPQIKAEMEKTLQWLVPVATNTTKAHHGFGWVGEWASSGSEANQRPAGQTILRIDTLHHADKEKTEAYILDLVVWLHHLVTQVRATTGYGLRSPVKSPIRSPNQKTIQLSSGSHNPSMGLPLLTTEDQEMLRDVSKRRKTPGISKSQEFETVAKARLCKHHRLSKSSSHSPMMGEMMKNKKDTFSTRRPSSVPIIDFDIDRMKALDVIDRVDTIRSL</sequence>
<accession>Q9XID5</accession>
<accession>Q6NQ48</accession>
<dbReference type="EMBL" id="AC007454">
    <property type="protein sequence ID" value="AAD39604.1"/>
    <property type="status" value="ALT_SEQ"/>
    <property type="molecule type" value="Genomic_DNA"/>
</dbReference>
<dbReference type="EMBL" id="CP002684">
    <property type="protein sequence ID" value="AEE31697.1"/>
    <property type="molecule type" value="Genomic_DNA"/>
</dbReference>
<dbReference type="EMBL" id="CP002684">
    <property type="protein sequence ID" value="ANM60400.1"/>
    <property type="molecule type" value="Genomic_DNA"/>
</dbReference>
<dbReference type="EMBL" id="BT010615">
    <property type="protein sequence ID" value="AAQ89637.1"/>
    <property type="molecule type" value="mRNA"/>
</dbReference>
<dbReference type="EMBL" id="AK176401">
    <property type="protein sequence ID" value="BAD44164.1"/>
    <property type="molecule type" value="mRNA"/>
</dbReference>
<dbReference type="EMBL" id="AK176473">
    <property type="protein sequence ID" value="BAD44236.1"/>
    <property type="molecule type" value="mRNA"/>
</dbReference>
<dbReference type="PIR" id="D86467">
    <property type="entry name" value="D86467"/>
</dbReference>
<dbReference type="RefSeq" id="NP_001322690.1">
    <property type="nucleotide sequence ID" value="NM_001333096.1"/>
</dbReference>
<dbReference type="RefSeq" id="NP_174692.1">
    <property type="nucleotide sequence ID" value="NM_103154.4"/>
</dbReference>
<dbReference type="SMR" id="Q9XID5"/>
<dbReference type="FunCoup" id="Q9XID5">
    <property type="interactions" value="2277"/>
</dbReference>
<dbReference type="IntAct" id="Q9XID5">
    <property type="interactions" value="3"/>
</dbReference>
<dbReference type="STRING" id="3702.Q6NQ48"/>
<dbReference type="iPTMnet" id="Q9XID5"/>
<dbReference type="PaxDb" id="3702-AT1G34320.1"/>
<dbReference type="ProteomicsDB" id="181282"/>
<dbReference type="EnsemblPlants" id="AT1G34320.1">
    <property type="protein sequence ID" value="AT1G34320.1"/>
    <property type="gene ID" value="AT1G34320"/>
</dbReference>
<dbReference type="EnsemblPlants" id="AT1G34320.2">
    <property type="protein sequence ID" value="AT1G34320.2"/>
    <property type="gene ID" value="AT1G34320"/>
</dbReference>
<dbReference type="GeneID" id="840333"/>
<dbReference type="Gramene" id="AT1G34320.1">
    <property type="protein sequence ID" value="AT1G34320.1"/>
    <property type="gene ID" value="AT1G34320"/>
</dbReference>
<dbReference type="Gramene" id="AT1G34320.2">
    <property type="protein sequence ID" value="AT1G34320.2"/>
    <property type="gene ID" value="AT1G34320"/>
</dbReference>
<dbReference type="KEGG" id="ath:AT1G34320"/>
<dbReference type="Araport" id="AT1G34320"/>
<dbReference type="TAIR" id="AT1G34320">
    <property type="gene designation" value="PSI1"/>
</dbReference>
<dbReference type="eggNOG" id="ENOG502QQVZ">
    <property type="taxonomic scope" value="Eukaryota"/>
</dbReference>
<dbReference type="HOGENOM" id="CLU_022639_0_0_1"/>
<dbReference type="InParanoid" id="Q9XID5"/>
<dbReference type="OMA" id="VNDGIPH"/>
<dbReference type="OrthoDB" id="2020544at2759"/>
<dbReference type="PRO" id="PR:Q9XID5"/>
<dbReference type="Proteomes" id="UP000006548">
    <property type="component" value="Chromosome 1"/>
</dbReference>
<dbReference type="ExpressionAtlas" id="Q9XID5">
    <property type="expression patterns" value="baseline and differential"/>
</dbReference>
<dbReference type="GO" id="GO:0005634">
    <property type="term" value="C:nucleus"/>
    <property type="evidence" value="ECO:0000314"/>
    <property type="project" value="UniProtKB"/>
</dbReference>
<dbReference type="GO" id="GO:0045927">
    <property type="term" value="P:positive regulation of growth"/>
    <property type="evidence" value="ECO:0000315"/>
    <property type="project" value="UniProtKB"/>
</dbReference>
<dbReference type="GO" id="GO:0006109">
    <property type="term" value="P:regulation of carbohydrate metabolic process"/>
    <property type="evidence" value="ECO:0000315"/>
    <property type="project" value="UniProtKB"/>
</dbReference>
<dbReference type="GO" id="GO:0043434">
    <property type="term" value="P:response to peptide hormone"/>
    <property type="evidence" value="ECO:0000315"/>
    <property type="project" value="UniProtKB"/>
</dbReference>
<dbReference type="InterPro" id="IPR021864">
    <property type="entry name" value="DUF3475"/>
</dbReference>
<dbReference type="InterPro" id="IPR007700">
    <property type="entry name" value="DUF668"/>
</dbReference>
<dbReference type="InterPro" id="IPR045021">
    <property type="entry name" value="PSI1/2/3"/>
</dbReference>
<dbReference type="PANTHER" id="PTHR31730">
    <property type="entry name" value="OS01G0873900 PROTEIN"/>
    <property type="match status" value="1"/>
</dbReference>
<dbReference type="PANTHER" id="PTHR31730:SF32">
    <property type="entry name" value="PROTEIN PSK SIMULATOR 1"/>
    <property type="match status" value="1"/>
</dbReference>
<dbReference type="Pfam" id="PF11961">
    <property type="entry name" value="DUF3475"/>
    <property type="match status" value="1"/>
</dbReference>
<dbReference type="Pfam" id="PF05003">
    <property type="entry name" value="DUF668"/>
    <property type="match status" value="1"/>
</dbReference>
<name>PSI1_ARATH</name>
<keyword id="KW-0217">Developmental protein</keyword>
<keyword id="KW-0449">Lipoprotein</keyword>
<keyword id="KW-0519">Myristate</keyword>
<keyword id="KW-0539">Nucleus</keyword>
<keyword id="KW-1185">Reference proteome</keyword>